<comment type="function">
    <text evidence="2">Component of the ubiquinol-cytochrome c reductase complex (complex III or cytochrome b-c1 complex) that is part of the mitochondrial respiratory chain. The b-c1 complex mediates electron transfer from ubiquinol to cytochrome c. Contributes to the generation of a proton gradient across the mitochondrial membrane that is then used for ATP synthesis.</text>
</comment>
<comment type="cofactor">
    <cofactor evidence="2">
        <name>heme b</name>
        <dbReference type="ChEBI" id="CHEBI:60344"/>
    </cofactor>
    <text evidence="2">Binds 2 heme b groups non-covalently.</text>
</comment>
<comment type="subunit">
    <text evidence="2">The cytochrome bc1 complex contains 11 subunits: 3 respiratory subunits (MT-CYB, CYC1 and UQCRFS1), 2 core proteins (UQCRC1 and UQCRC2) and 6 low-molecular weight proteins (UQCRH/QCR6, UQCRB/QCR7, UQCRQ/QCR8, UQCR10/QCR9, UQCR11/QCR10 and a cleavage product of UQCRFS1). This cytochrome bc1 complex then forms a dimer.</text>
</comment>
<comment type="subcellular location">
    <subcellularLocation>
        <location evidence="2">Mitochondrion inner membrane</location>
        <topology evidence="2">Multi-pass membrane protein</topology>
    </subcellularLocation>
</comment>
<comment type="miscellaneous">
    <text evidence="1">Heme 1 (or BL or b562) is low-potential and absorbs at about 562 nm, and heme 2 (or BH or b566) is high-potential and absorbs at about 566 nm.</text>
</comment>
<comment type="similarity">
    <text evidence="3 4">Belongs to the cytochrome b family.</text>
</comment>
<comment type="caution">
    <text evidence="2">The full-length protein contains only eight transmembrane helices, not nine as predicted by bioinformatics tools.</text>
</comment>
<sequence length="379" mass="42453">MTNIRKTHPLAKIINNSLIDLPAPSNISAWWNFGSLLGICLILQILTGLFLAMHYTSDTTTAFSSVAHICRDVNYGWIIRYMHANGASMFFICLFLHVGRGLYYGSYMFPETWNIGIILLFAVMATAFMGYVLPWGQMSFWGATVITNLLSAIPYIGTNLVEWIWGGFSVDKATLTRFFAFHFILPFIISALVAVHLLFLHETGSNNPSGIPSNSDNIPFHPYYTIKDILGVLSLVSVLMVLVLFSPDLLGDPDNYTPANPLNTPPHIKPEWYFLFAYAILRSIPNKLGGVLALVLSILVLAVIPLLHTSKQRSMMFRPLSQCLFWLLVADLLTLTWIGGQPVEHPFIIIGQLASILYFMLLLVLMPIASIIENNLLKW</sequence>
<protein>
    <recommendedName>
        <fullName>Cytochrome b</fullName>
    </recommendedName>
    <alternativeName>
        <fullName>Complex III subunit 3</fullName>
    </alternativeName>
    <alternativeName>
        <fullName>Complex III subunit III</fullName>
    </alternativeName>
    <alternativeName>
        <fullName>Cytochrome b-c1 complex subunit 3</fullName>
    </alternativeName>
    <alternativeName>
        <fullName>Ubiquinol-cytochrome-c reductase complex cytochrome b subunit</fullName>
    </alternativeName>
</protein>
<feature type="chain" id="PRO_0000061140" description="Cytochrome b">
    <location>
        <begin position="1"/>
        <end position="379"/>
    </location>
</feature>
<feature type="transmembrane region" description="Helical" evidence="2">
    <location>
        <begin position="33"/>
        <end position="53"/>
    </location>
</feature>
<feature type="transmembrane region" description="Helical" evidence="2">
    <location>
        <begin position="77"/>
        <end position="98"/>
    </location>
</feature>
<feature type="transmembrane region" description="Helical" evidence="2">
    <location>
        <begin position="113"/>
        <end position="133"/>
    </location>
</feature>
<feature type="transmembrane region" description="Helical" evidence="2">
    <location>
        <begin position="178"/>
        <end position="198"/>
    </location>
</feature>
<feature type="transmembrane region" description="Helical" evidence="2">
    <location>
        <begin position="226"/>
        <end position="246"/>
    </location>
</feature>
<feature type="transmembrane region" description="Helical" evidence="2">
    <location>
        <begin position="288"/>
        <end position="308"/>
    </location>
</feature>
<feature type="transmembrane region" description="Helical" evidence="2">
    <location>
        <begin position="320"/>
        <end position="340"/>
    </location>
</feature>
<feature type="transmembrane region" description="Helical" evidence="2">
    <location>
        <begin position="347"/>
        <end position="367"/>
    </location>
</feature>
<feature type="binding site" description="axial binding residue" evidence="2">
    <location>
        <position position="83"/>
    </location>
    <ligand>
        <name>heme b</name>
        <dbReference type="ChEBI" id="CHEBI:60344"/>
        <label>b562</label>
    </ligand>
    <ligandPart>
        <name>Fe</name>
        <dbReference type="ChEBI" id="CHEBI:18248"/>
    </ligandPart>
</feature>
<feature type="binding site" description="axial binding residue" evidence="2">
    <location>
        <position position="97"/>
    </location>
    <ligand>
        <name>heme b</name>
        <dbReference type="ChEBI" id="CHEBI:60344"/>
        <label>b566</label>
    </ligand>
    <ligandPart>
        <name>Fe</name>
        <dbReference type="ChEBI" id="CHEBI:18248"/>
    </ligandPart>
</feature>
<feature type="binding site" description="axial binding residue" evidence="2">
    <location>
        <position position="182"/>
    </location>
    <ligand>
        <name>heme b</name>
        <dbReference type="ChEBI" id="CHEBI:60344"/>
        <label>b562</label>
    </ligand>
    <ligandPart>
        <name>Fe</name>
        <dbReference type="ChEBI" id="CHEBI:18248"/>
    </ligandPart>
</feature>
<feature type="binding site" description="axial binding residue" evidence="2">
    <location>
        <position position="196"/>
    </location>
    <ligand>
        <name>heme b</name>
        <dbReference type="ChEBI" id="CHEBI:60344"/>
        <label>b566</label>
    </ligand>
    <ligandPart>
        <name>Fe</name>
        <dbReference type="ChEBI" id="CHEBI:18248"/>
    </ligandPart>
</feature>
<feature type="binding site" evidence="2">
    <location>
        <position position="201"/>
    </location>
    <ligand>
        <name>a ubiquinone</name>
        <dbReference type="ChEBI" id="CHEBI:16389"/>
    </ligand>
</feature>
<accession>O78932</accession>
<proteinExistence type="inferred from homology"/>
<name>CYB_HYDML</name>
<keyword id="KW-0249">Electron transport</keyword>
<keyword id="KW-0349">Heme</keyword>
<keyword id="KW-0408">Iron</keyword>
<keyword id="KW-0472">Membrane</keyword>
<keyword id="KW-0479">Metal-binding</keyword>
<keyword id="KW-0496">Mitochondrion</keyword>
<keyword id="KW-0999">Mitochondrion inner membrane</keyword>
<keyword id="KW-0679">Respiratory chain</keyword>
<keyword id="KW-0812">Transmembrane</keyword>
<keyword id="KW-1133">Transmembrane helix</keyword>
<keyword id="KW-0813">Transport</keyword>
<keyword id="KW-0830">Ubiquinone</keyword>
<reference key="1">
    <citation type="journal article" date="1998" name="J. Zool. (Lond.)">
        <title>Phylogenetic relationships of otters (Carnivora: Mustelidae) based on mitochondrial cytochrome b sequences.</title>
        <authorList>
            <person name="Koepfli K.-P."/>
            <person name="Wayne R.K."/>
        </authorList>
    </citation>
    <scope>NUCLEOTIDE SEQUENCE [GENOMIC DNA]</scope>
</reference>
<evidence type="ECO:0000250" key="1"/>
<evidence type="ECO:0000250" key="2">
    <source>
        <dbReference type="UniProtKB" id="P00157"/>
    </source>
</evidence>
<evidence type="ECO:0000255" key="3">
    <source>
        <dbReference type="PROSITE-ProRule" id="PRU00967"/>
    </source>
</evidence>
<evidence type="ECO:0000255" key="4">
    <source>
        <dbReference type="PROSITE-ProRule" id="PRU00968"/>
    </source>
</evidence>
<dbReference type="EMBL" id="AF057125">
    <property type="protein sequence ID" value="AAC33705.1"/>
    <property type="molecule type" value="Genomic_DNA"/>
</dbReference>
<dbReference type="SMR" id="O78932"/>
<dbReference type="GO" id="GO:0005743">
    <property type="term" value="C:mitochondrial inner membrane"/>
    <property type="evidence" value="ECO:0007669"/>
    <property type="project" value="UniProtKB-SubCell"/>
</dbReference>
<dbReference type="GO" id="GO:0045275">
    <property type="term" value="C:respiratory chain complex III"/>
    <property type="evidence" value="ECO:0007669"/>
    <property type="project" value="InterPro"/>
</dbReference>
<dbReference type="GO" id="GO:0046872">
    <property type="term" value="F:metal ion binding"/>
    <property type="evidence" value="ECO:0007669"/>
    <property type="project" value="UniProtKB-KW"/>
</dbReference>
<dbReference type="GO" id="GO:0008121">
    <property type="term" value="F:ubiquinol-cytochrome-c reductase activity"/>
    <property type="evidence" value="ECO:0007669"/>
    <property type="project" value="InterPro"/>
</dbReference>
<dbReference type="GO" id="GO:0006122">
    <property type="term" value="P:mitochondrial electron transport, ubiquinol to cytochrome c"/>
    <property type="evidence" value="ECO:0007669"/>
    <property type="project" value="TreeGrafter"/>
</dbReference>
<dbReference type="CDD" id="cd00290">
    <property type="entry name" value="cytochrome_b_C"/>
    <property type="match status" value="1"/>
</dbReference>
<dbReference type="CDD" id="cd00284">
    <property type="entry name" value="Cytochrome_b_N"/>
    <property type="match status" value="1"/>
</dbReference>
<dbReference type="FunFam" id="1.20.810.10:FF:000002">
    <property type="entry name" value="Cytochrome b"/>
    <property type="match status" value="1"/>
</dbReference>
<dbReference type="Gene3D" id="1.20.810.10">
    <property type="entry name" value="Cytochrome Bc1 Complex, Chain C"/>
    <property type="match status" value="1"/>
</dbReference>
<dbReference type="InterPro" id="IPR005798">
    <property type="entry name" value="Cyt_b/b6_C"/>
</dbReference>
<dbReference type="InterPro" id="IPR036150">
    <property type="entry name" value="Cyt_b/b6_C_sf"/>
</dbReference>
<dbReference type="InterPro" id="IPR005797">
    <property type="entry name" value="Cyt_b/b6_N"/>
</dbReference>
<dbReference type="InterPro" id="IPR027387">
    <property type="entry name" value="Cytb/b6-like_sf"/>
</dbReference>
<dbReference type="InterPro" id="IPR030689">
    <property type="entry name" value="Cytochrome_b"/>
</dbReference>
<dbReference type="InterPro" id="IPR048260">
    <property type="entry name" value="Cytochrome_b_C_euk/bac"/>
</dbReference>
<dbReference type="InterPro" id="IPR048259">
    <property type="entry name" value="Cytochrome_b_N_euk/bac"/>
</dbReference>
<dbReference type="InterPro" id="IPR016174">
    <property type="entry name" value="Di-haem_cyt_TM"/>
</dbReference>
<dbReference type="PANTHER" id="PTHR19271">
    <property type="entry name" value="CYTOCHROME B"/>
    <property type="match status" value="1"/>
</dbReference>
<dbReference type="PANTHER" id="PTHR19271:SF16">
    <property type="entry name" value="CYTOCHROME B"/>
    <property type="match status" value="1"/>
</dbReference>
<dbReference type="Pfam" id="PF00032">
    <property type="entry name" value="Cytochrom_B_C"/>
    <property type="match status" value="1"/>
</dbReference>
<dbReference type="Pfam" id="PF00033">
    <property type="entry name" value="Cytochrome_B"/>
    <property type="match status" value="1"/>
</dbReference>
<dbReference type="PIRSF" id="PIRSF038885">
    <property type="entry name" value="COB"/>
    <property type="match status" value="1"/>
</dbReference>
<dbReference type="SUPFAM" id="SSF81648">
    <property type="entry name" value="a domain/subunit of cytochrome bc1 complex (Ubiquinol-cytochrome c reductase)"/>
    <property type="match status" value="1"/>
</dbReference>
<dbReference type="SUPFAM" id="SSF81342">
    <property type="entry name" value="Transmembrane di-heme cytochromes"/>
    <property type="match status" value="1"/>
</dbReference>
<dbReference type="PROSITE" id="PS51003">
    <property type="entry name" value="CYTB_CTER"/>
    <property type="match status" value="1"/>
</dbReference>
<dbReference type="PROSITE" id="PS51002">
    <property type="entry name" value="CYTB_NTER"/>
    <property type="match status" value="1"/>
</dbReference>
<organism>
    <name type="scientific">Hydrictis maculicollis</name>
    <name type="common">Spotted necked otter</name>
    <name type="synonym">Lutra maculicollis</name>
    <dbReference type="NCBI Taxonomy" id="452641"/>
    <lineage>
        <taxon>Eukaryota</taxon>
        <taxon>Metazoa</taxon>
        <taxon>Chordata</taxon>
        <taxon>Craniata</taxon>
        <taxon>Vertebrata</taxon>
        <taxon>Euteleostomi</taxon>
        <taxon>Mammalia</taxon>
        <taxon>Eutheria</taxon>
        <taxon>Laurasiatheria</taxon>
        <taxon>Carnivora</taxon>
        <taxon>Caniformia</taxon>
        <taxon>Musteloidea</taxon>
        <taxon>Mustelidae</taxon>
        <taxon>Lutrinae</taxon>
        <taxon>Hydrictis</taxon>
    </lineage>
</organism>
<gene>
    <name type="primary">MT-CYB</name>
    <name type="synonym">COB</name>
    <name type="synonym">CYTB</name>
    <name type="synonym">MTCYB</name>
</gene>
<geneLocation type="mitochondrion"/>